<reference key="1">
    <citation type="journal article" date="2004" name="Nature">
        <title>Genome evolution in yeasts.</title>
        <authorList>
            <person name="Dujon B."/>
            <person name="Sherman D."/>
            <person name="Fischer G."/>
            <person name="Durrens P."/>
            <person name="Casaregola S."/>
            <person name="Lafontaine I."/>
            <person name="de Montigny J."/>
            <person name="Marck C."/>
            <person name="Neuveglise C."/>
            <person name="Talla E."/>
            <person name="Goffard N."/>
            <person name="Frangeul L."/>
            <person name="Aigle M."/>
            <person name="Anthouard V."/>
            <person name="Babour A."/>
            <person name="Barbe V."/>
            <person name="Barnay S."/>
            <person name="Blanchin S."/>
            <person name="Beckerich J.-M."/>
            <person name="Beyne E."/>
            <person name="Bleykasten C."/>
            <person name="Boisrame A."/>
            <person name="Boyer J."/>
            <person name="Cattolico L."/>
            <person name="Confanioleri F."/>
            <person name="de Daruvar A."/>
            <person name="Despons L."/>
            <person name="Fabre E."/>
            <person name="Fairhead C."/>
            <person name="Ferry-Dumazet H."/>
            <person name="Groppi A."/>
            <person name="Hantraye F."/>
            <person name="Hennequin C."/>
            <person name="Jauniaux N."/>
            <person name="Joyet P."/>
            <person name="Kachouri R."/>
            <person name="Kerrest A."/>
            <person name="Koszul R."/>
            <person name="Lemaire M."/>
            <person name="Lesur I."/>
            <person name="Ma L."/>
            <person name="Muller H."/>
            <person name="Nicaud J.-M."/>
            <person name="Nikolski M."/>
            <person name="Oztas S."/>
            <person name="Ozier-Kalogeropoulos O."/>
            <person name="Pellenz S."/>
            <person name="Potier S."/>
            <person name="Richard G.-F."/>
            <person name="Straub M.-L."/>
            <person name="Suleau A."/>
            <person name="Swennen D."/>
            <person name="Tekaia F."/>
            <person name="Wesolowski-Louvel M."/>
            <person name="Westhof E."/>
            <person name="Wirth B."/>
            <person name="Zeniou-Meyer M."/>
            <person name="Zivanovic Y."/>
            <person name="Bolotin-Fukuhara M."/>
            <person name="Thierry A."/>
            <person name="Bouchier C."/>
            <person name="Caudron B."/>
            <person name="Scarpelli C."/>
            <person name="Gaillardin C."/>
            <person name="Weissenbach J."/>
            <person name="Wincker P."/>
            <person name="Souciet J.-L."/>
        </authorList>
    </citation>
    <scope>NUCLEOTIDE SEQUENCE [LARGE SCALE GENOMIC DNA]</scope>
    <source>
        <strain>ATCC 8585 / CBS 2359 / DSM 70799 / NBRC 1267 / NRRL Y-1140 / WM37</strain>
    </source>
</reference>
<proteinExistence type="inferred from homology"/>
<gene>
    <name type="primary">ZRG8</name>
    <name type="ordered locus">KLLA0B00715g</name>
</gene>
<feature type="chain" id="PRO_0000333504" description="Zinc-regulated protein 8">
    <location>
        <begin position="1"/>
        <end position="820"/>
    </location>
</feature>
<feature type="region of interest" description="Disordered" evidence="2">
    <location>
        <begin position="1"/>
        <end position="54"/>
    </location>
</feature>
<feature type="region of interest" description="Disordered" evidence="2">
    <location>
        <begin position="158"/>
        <end position="182"/>
    </location>
</feature>
<feature type="region of interest" description="Disordered" evidence="2">
    <location>
        <begin position="231"/>
        <end position="266"/>
    </location>
</feature>
<feature type="region of interest" description="Disordered" evidence="2">
    <location>
        <begin position="341"/>
        <end position="370"/>
    </location>
</feature>
<feature type="region of interest" description="Disordered" evidence="2">
    <location>
        <begin position="454"/>
        <end position="498"/>
    </location>
</feature>
<feature type="region of interest" description="Disordered" evidence="2">
    <location>
        <begin position="777"/>
        <end position="820"/>
    </location>
</feature>
<feature type="compositionally biased region" description="Basic residues" evidence="2">
    <location>
        <begin position="1"/>
        <end position="11"/>
    </location>
</feature>
<feature type="compositionally biased region" description="Basic and acidic residues" evidence="2">
    <location>
        <begin position="17"/>
        <end position="30"/>
    </location>
</feature>
<feature type="compositionally biased region" description="Polar residues" evidence="2">
    <location>
        <begin position="159"/>
        <end position="174"/>
    </location>
</feature>
<feature type="compositionally biased region" description="Basic and acidic residues" evidence="2">
    <location>
        <begin position="253"/>
        <end position="264"/>
    </location>
</feature>
<feature type="compositionally biased region" description="Acidic residues" evidence="2">
    <location>
        <begin position="344"/>
        <end position="360"/>
    </location>
</feature>
<feature type="compositionally biased region" description="Low complexity" evidence="2">
    <location>
        <begin position="454"/>
        <end position="464"/>
    </location>
</feature>
<feature type="compositionally biased region" description="Basic and acidic residues" evidence="2">
    <location>
        <begin position="467"/>
        <end position="484"/>
    </location>
</feature>
<feature type="compositionally biased region" description="Polar residues" evidence="2">
    <location>
        <begin position="779"/>
        <end position="820"/>
    </location>
</feature>
<dbReference type="EMBL" id="CR382122">
    <property type="protein sequence ID" value="CAH01955.1"/>
    <property type="molecule type" value="Genomic_DNA"/>
</dbReference>
<dbReference type="RefSeq" id="XP_451562.1">
    <property type="nucleotide sequence ID" value="XM_451562.1"/>
</dbReference>
<dbReference type="SMR" id="Q6CWX7"/>
<dbReference type="FunCoup" id="Q6CWX7">
    <property type="interactions" value="66"/>
</dbReference>
<dbReference type="PaxDb" id="284590-Q6CWX7"/>
<dbReference type="KEGG" id="kla:KLLA0_B00715g"/>
<dbReference type="eggNOG" id="ENOG502QSM8">
    <property type="taxonomic scope" value="Eukaryota"/>
</dbReference>
<dbReference type="HOGENOM" id="CLU_301677_0_0_1"/>
<dbReference type="InParanoid" id="Q6CWX7"/>
<dbReference type="OMA" id="QSLKYHD"/>
<dbReference type="Proteomes" id="UP000000598">
    <property type="component" value="Chromosome B"/>
</dbReference>
<dbReference type="GO" id="GO:0005935">
    <property type="term" value="C:cellular bud neck"/>
    <property type="evidence" value="ECO:0007669"/>
    <property type="project" value="UniProtKB-SubCell"/>
</dbReference>
<dbReference type="GO" id="GO:0005934">
    <property type="term" value="C:cellular bud tip"/>
    <property type="evidence" value="ECO:0007669"/>
    <property type="project" value="UniProtKB-SubCell"/>
</dbReference>
<dbReference type="GO" id="GO:0005737">
    <property type="term" value="C:cytoplasm"/>
    <property type="evidence" value="ECO:0007669"/>
    <property type="project" value="UniProtKB-SubCell"/>
</dbReference>
<comment type="function">
    <text evidence="1">Involved in maintenance of polarized growth and daughter-cell-specific transcription.</text>
</comment>
<comment type="subcellular location">
    <subcellularLocation>
        <location evidence="1">Cytoplasm</location>
    </subcellularLocation>
    <subcellularLocation>
        <location evidence="1">Bud</location>
    </subcellularLocation>
    <subcellularLocation>
        <location evidence="1">Bud neck</location>
    </subcellularLocation>
    <subcellularLocation>
        <location evidence="1">Bud tip</location>
    </subcellularLocation>
</comment>
<comment type="similarity">
    <text evidence="3">Belongs to the ZRG8 family.</text>
</comment>
<evidence type="ECO:0000250" key="1"/>
<evidence type="ECO:0000256" key="2">
    <source>
        <dbReference type="SAM" id="MobiDB-lite"/>
    </source>
</evidence>
<evidence type="ECO:0000305" key="3"/>
<accession>Q6CWX7</accession>
<name>ZRG8_KLULA</name>
<sequence length="820" mass="92403">MRSFIKTHKRASSLDNSPRKSSNESPENRRNSQGSFGTELSYPSGYPPNNVLKQSSSFEPLHKLTSNKIFSSKLFKKSSNGKTSSSNTSPLLSRSDAETFAPLLSNTNNIPAIKGTRKHEWGDNDDTSESVILLNRTSMSSMSDTNQDTPDTEIVRIHPNSQQGSILSSQTSADRTPRLSLEEAEDVEDYDITKHSSLSRSQSLKKKRNRLARIHSHDDIMHLRSQSSFSSDLLGSGFSPIPEKSPNPSPLPKYERSPRKENNILDRTNLFDLRKISEASYTAEDESNFNRPFTGVAGGETIQITTSIKDSFVPSPETSHKIRFAADNVIPLSKAQIIENSASEADEDDSNEEDGEEESDSSSRFSFENGNDLCGRTASLKYYSTETNTPPLYVNDIYENDNFDDEMNYFDSNEEEDENMDHLYGGDNTALSGFAGMCTLSDDEFDRTNAAISQELSSHSSQSSKGYTERQRGFSKRDSNKSFEDGNDDYDPSNHCRSYHDIYNLSDEEEAQTINKKVTEPRKRKISDGTNKVTKYADMFLLSDDDAESGSQDEDFGDESRENDVKFNVNSERYGVEHTNLVTTQNHNLNPISFKSPSRFLDVSNVNHSPLAYKTPERNILKSPLQQPIKYHGVSSLLDNDIQGTMKNLYYIDETDEDRFLENSAESEEYYLDEINGIPEDFEFSDDENIMRNLSPLSRLNRTKLLAFRRTHSYSDRPLGVLKDNTPLNYKLEIKNKTVTFFDHNSIHRSYSEPFSSSLLHDSRKSEDNCEDRILDNKTLASPVTPNSSFTKPSPSFTQNSSLSPIQESTTSSDASPKIL</sequence>
<protein>
    <recommendedName>
        <fullName>Zinc-regulated protein 8</fullName>
    </recommendedName>
</protein>
<organism>
    <name type="scientific">Kluyveromyces lactis (strain ATCC 8585 / CBS 2359 / DSM 70799 / NBRC 1267 / NRRL Y-1140 / WM37)</name>
    <name type="common">Yeast</name>
    <name type="synonym">Candida sphaerica</name>
    <dbReference type="NCBI Taxonomy" id="284590"/>
    <lineage>
        <taxon>Eukaryota</taxon>
        <taxon>Fungi</taxon>
        <taxon>Dikarya</taxon>
        <taxon>Ascomycota</taxon>
        <taxon>Saccharomycotina</taxon>
        <taxon>Saccharomycetes</taxon>
        <taxon>Saccharomycetales</taxon>
        <taxon>Saccharomycetaceae</taxon>
        <taxon>Kluyveromyces</taxon>
    </lineage>
</organism>
<keyword id="KW-0963">Cytoplasm</keyword>
<keyword id="KW-1185">Reference proteome</keyword>
<keyword id="KW-0862">Zinc</keyword>